<protein>
    <recommendedName>
        <fullName evidence="1">Large ribosomal subunit protein bL27</fullName>
    </recommendedName>
    <alternativeName>
        <fullName evidence="3">50S ribosomal protein L27</fullName>
    </alternativeName>
</protein>
<organism>
    <name type="scientific">Cronobacter sakazakii (strain ATCC BAA-894)</name>
    <name type="common">Enterobacter sakazakii</name>
    <dbReference type="NCBI Taxonomy" id="290339"/>
    <lineage>
        <taxon>Bacteria</taxon>
        <taxon>Pseudomonadati</taxon>
        <taxon>Pseudomonadota</taxon>
        <taxon>Gammaproteobacteria</taxon>
        <taxon>Enterobacterales</taxon>
        <taxon>Enterobacteriaceae</taxon>
        <taxon>Cronobacter</taxon>
    </lineage>
</organism>
<reference key="1">
    <citation type="journal article" date="2010" name="PLoS ONE">
        <title>Genome sequence of Cronobacter sakazakii BAA-894 and comparative genomic hybridization analysis with other Cronobacter species.</title>
        <authorList>
            <person name="Kucerova E."/>
            <person name="Clifton S.W."/>
            <person name="Xia X.Q."/>
            <person name="Long F."/>
            <person name="Porwollik S."/>
            <person name="Fulton L."/>
            <person name="Fronick C."/>
            <person name="Minx P."/>
            <person name="Kyung K."/>
            <person name="Warren W."/>
            <person name="Fulton R."/>
            <person name="Feng D."/>
            <person name="Wollam A."/>
            <person name="Shah N."/>
            <person name="Bhonagiri V."/>
            <person name="Nash W.E."/>
            <person name="Hallsworth-Pepin K."/>
            <person name="Wilson R.K."/>
            <person name="McClelland M."/>
            <person name="Forsythe S.J."/>
        </authorList>
    </citation>
    <scope>NUCLEOTIDE SEQUENCE [LARGE SCALE GENOMIC DNA]</scope>
    <source>
        <strain>ATCC BAA-894</strain>
    </source>
</reference>
<proteinExistence type="inferred from homology"/>
<sequence length="85" mass="9139">MAHKKAGGSTRNGRDSEAKRLGVKRFGGESVLAGSIIVRQRGTKFHAGNNVGCGRDHTLFAKADGKVKFEVKGPNNRKYISIVAE</sequence>
<name>RL27_CROS8</name>
<comment type="similarity">
    <text evidence="1">Belongs to the bacterial ribosomal protein bL27 family.</text>
</comment>
<dbReference type="EMBL" id="CP000783">
    <property type="protein sequence ID" value="ABU78789.1"/>
    <property type="molecule type" value="Genomic_DNA"/>
</dbReference>
<dbReference type="RefSeq" id="WP_004385076.1">
    <property type="nucleotide sequence ID" value="NC_009778.1"/>
</dbReference>
<dbReference type="SMR" id="A7MJF4"/>
<dbReference type="GeneID" id="97603532"/>
<dbReference type="KEGG" id="esa:ESA_03578"/>
<dbReference type="HOGENOM" id="CLU_095424_4_1_6"/>
<dbReference type="Proteomes" id="UP000000260">
    <property type="component" value="Chromosome"/>
</dbReference>
<dbReference type="GO" id="GO:0022625">
    <property type="term" value="C:cytosolic large ribosomal subunit"/>
    <property type="evidence" value="ECO:0007669"/>
    <property type="project" value="TreeGrafter"/>
</dbReference>
<dbReference type="GO" id="GO:0003735">
    <property type="term" value="F:structural constituent of ribosome"/>
    <property type="evidence" value="ECO:0007669"/>
    <property type="project" value="InterPro"/>
</dbReference>
<dbReference type="GO" id="GO:0006412">
    <property type="term" value="P:translation"/>
    <property type="evidence" value="ECO:0007669"/>
    <property type="project" value="UniProtKB-UniRule"/>
</dbReference>
<dbReference type="FunFam" id="2.40.50.100:FF:000001">
    <property type="entry name" value="50S ribosomal protein L27"/>
    <property type="match status" value="1"/>
</dbReference>
<dbReference type="Gene3D" id="2.40.50.100">
    <property type="match status" value="1"/>
</dbReference>
<dbReference type="HAMAP" id="MF_00539">
    <property type="entry name" value="Ribosomal_bL27"/>
    <property type="match status" value="1"/>
</dbReference>
<dbReference type="InterPro" id="IPR001684">
    <property type="entry name" value="Ribosomal_bL27"/>
</dbReference>
<dbReference type="InterPro" id="IPR018261">
    <property type="entry name" value="Ribosomal_bL27_CS"/>
</dbReference>
<dbReference type="NCBIfam" id="TIGR00062">
    <property type="entry name" value="L27"/>
    <property type="match status" value="1"/>
</dbReference>
<dbReference type="PANTHER" id="PTHR15893:SF0">
    <property type="entry name" value="LARGE RIBOSOMAL SUBUNIT PROTEIN BL27M"/>
    <property type="match status" value="1"/>
</dbReference>
<dbReference type="PANTHER" id="PTHR15893">
    <property type="entry name" value="RIBOSOMAL PROTEIN L27"/>
    <property type="match status" value="1"/>
</dbReference>
<dbReference type="Pfam" id="PF01016">
    <property type="entry name" value="Ribosomal_L27"/>
    <property type="match status" value="1"/>
</dbReference>
<dbReference type="PRINTS" id="PR00063">
    <property type="entry name" value="RIBOSOMALL27"/>
</dbReference>
<dbReference type="SUPFAM" id="SSF110324">
    <property type="entry name" value="Ribosomal L27 protein-like"/>
    <property type="match status" value="1"/>
</dbReference>
<dbReference type="PROSITE" id="PS00831">
    <property type="entry name" value="RIBOSOMAL_L27"/>
    <property type="match status" value="1"/>
</dbReference>
<evidence type="ECO:0000255" key="1">
    <source>
        <dbReference type="HAMAP-Rule" id="MF_00539"/>
    </source>
</evidence>
<evidence type="ECO:0000256" key="2">
    <source>
        <dbReference type="SAM" id="MobiDB-lite"/>
    </source>
</evidence>
<evidence type="ECO:0000305" key="3"/>
<feature type="chain" id="PRO_1000017476" description="Large ribosomal subunit protein bL27">
    <location>
        <begin position="1"/>
        <end position="85"/>
    </location>
</feature>
<feature type="region of interest" description="Disordered" evidence="2">
    <location>
        <begin position="1"/>
        <end position="20"/>
    </location>
</feature>
<accession>A7MJF4</accession>
<keyword id="KW-1185">Reference proteome</keyword>
<keyword id="KW-0687">Ribonucleoprotein</keyword>
<keyword id="KW-0689">Ribosomal protein</keyword>
<gene>
    <name evidence="1" type="primary">rpmA</name>
    <name type="ordered locus">ESA_03578</name>
</gene>